<accession>Q8HXX3</accession>
<feature type="chain" id="PRO_0000069723" description="Melanocortin receptor 4">
    <location>
        <begin position="1"/>
        <end position="332"/>
    </location>
</feature>
<feature type="topological domain" description="Extracellular" evidence="4">
    <location>
        <begin position="1"/>
        <end position="43"/>
    </location>
</feature>
<feature type="transmembrane region" description="Helical; Name=1" evidence="4">
    <location>
        <begin position="44"/>
        <end position="69"/>
    </location>
</feature>
<feature type="topological domain" description="Cytoplasmic" evidence="4">
    <location>
        <begin position="70"/>
        <end position="81"/>
    </location>
</feature>
<feature type="transmembrane region" description="Helical; Name=2" evidence="4">
    <location>
        <begin position="82"/>
        <end position="106"/>
    </location>
</feature>
<feature type="topological domain" description="Extracellular" evidence="4">
    <location>
        <begin position="107"/>
        <end position="123"/>
    </location>
</feature>
<feature type="transmembrane region" description="Helical; Name=3" evidence="4">
    <location>
        <begin position="124"/>
        <end position="145"/>
    </location>
</feature>
<feature type="topological domain" description="Cytoplasmic" evidence="4">
    <location>
        <begin position="146"/>
        <end position="165"/>
    </location>
</feature>
<feature type="transmembrane region" description="Helical; Name=4" evidence="4">
    <location>
        <begin position="166"/>
        <end position="186"/>
    </location>
</feature>
<feature type="topological domain" description="Extracellular" evidence="4">
    <location>
        <begin position="187"/>
        <end position="191"/>
    </location>
</feature>
<feature type="transmembrane region" description="Helical; Name=5" evidence="4">
    <location>
        <begin position="192"/>
        <end position="215"/>
    </location>
</feature>
<feature type="topological domain" description="Cytoplasmic" evidence="4">
    <location>
        <begin position="216"/>
        <end position="248"/>
    </location>
</feature>
<feature type="transmembrane region" description="Helical; Name=6" evidence="4">
    <location>
        <begin position="249"/>
        <end position="271"/>
    </location>
</feature>
<feature type="topological domain" description="Extracellular" evidence="4">
    <location>
        <begin position="272"/>
        <end position="280"/>
    </location>
</feature>
<feature type="transmembrane region" description="Helical; Name=7" evidence="4">
    <location>
        <begin position="281"/>
        <end position="304"/>
    </location>
</feature>
<feature type="topological domain" description="Cytoplasmic" evidence="4">
    <location>
        <begin position="305"/>
        <end position="332"/>
    </location>
</feature>
<feature type="binding site" evidence="2">
    <location>
        <position position="100"/>
    </location>
    <ligand>
        <name>Ca(2+)</name>
        <dbReference type="ChEBI" id="CHEBI:29108"/>
    </ligand>
</feature>
<feature type="binding site" evidence="2">
    <location>
        <position position="122"/>
    </location>
    <ligand>
        <name>Ca(2+)</name>
        <dbReference type="ChEBI" id="CHEBI:29108"/>
    </ligand>
</feature>
<feature type="binding site" evidence="2">
    <location>
        <position position="126"/>
    </location>
    <ligand>
        <name>Ca(2+)</name>
        <dbReference type="ChEBI" id="CHEBI:29108"/>
    </ligand>
</feature>
<feature type="lipid moiety-binding region" description="S-palmitoyl cysteine" evidence="4">
    <location>
        <position position="318"/>
    </location>
</feature>
<feature type="glycosylation site" description="N-linked (GlcNAc...) asparagine" evidence="4">
    <location>
        <position position="3"/>
    </location>
</feature>
<feature type="glycosylation site" description="N-linked (GlcNAc...) asparagine" evidence="4">
    <location>
        <position position="17"/>
    </location>
</feature>
<feature type="glycosylation site" description="N-linked (GlcNAc...) asparagine" evidence="4">
    <location>
        <position position="26"/>
    </location>
</feature>
<feature type="disulfide bond" evidence="2">
    <location>
        <begin position="40"/>
        <end position="279"/>
    </location>
</feature>
<feature type="disulfide bond" description="Interchain" evidence="5">
    <location>
        <position position="84"/>
    </location>
</feature>
<feature type="disulfide bond" evidence="2">
    <location>
        <begin position="271"/>
        <end position="277"/>
    </location>
</feature>
<proteinExistence type="evidence at transcript level"/>
<keyword id="KW-0106">Calcium</keyword>
<keyword id="KW-1003">Cell membrane</keyword>
<keyword id="KW-1015">Disulfide bond</keyword>
<keyword id="KW-0297">G-protein coupled receptor</keyword>
<keyword id="KW-0325">Glycoprotein</keyword>
<keyword id="KW-0449">Lipoprotein</keyword>
<keyword id="KW-0472">Membrane</keyword>
<keyword id="KW-0479">Metal-binding</keyword>
<keyword id="KW-0564">Palmitate</keyword>
<keyword id="KW-0675">Receptor</keyword>
<keyword id="KW-1185">Reference proteome</keyword>
<keyword id="KW-0807">Transducer</keyword>
<keyword id="KW-0812">Transmembrane</keyword>
<keyword id="KW-1133">Transmembrane helix</keyword>
<comment type="function">
    <text evidence="2 3">Hormone receptor that acts as a key component of the leptin-melanocortin pathway at the intersection of homeostatic maintenance of energetic state. Plays a role in regulating food intake: activation by a stimulating hormone such as anorexigenic alpha-melanocyte stimulating hormone (alpha-MSH) inhibits appetite, whereas binding to a natural antagonist like Agouti-related protein/AGRP promotes appetite. G-protein-coupled receptor that activates conventional Galphas signaling leading to induction of anorexogenic signaling in the hypothalamus to result in negative energy balance (By similarity). Regulates the firing activity of neurons from the hypothalamus by alpha-MSH and AGRP independently of Galphas signaling by ligand-induced coupling of closure of inwardly rectifying potassium channel KCNJ13 (By similarity). In intestinal epithelial cells, plays a role in the inhibition of hepatic glucose production via nesfatin-1/NUCB2 leading to increased cyclic adenosine monophosphate (cAMP) levels and glucagon-like peptide 1 (GLP-1) secretion in the intestinal epithelium (By similarity).</text>
</comment>
<comment type="subunit">
    <text evidence="1 2">Homodimer; disulfide-linked, also forms higher order oligomers. Interacts with GNAS (By similarity). Interacts with ATRNL1 (By similarity). Interacts with MGRN1; this interaction competes with GNAS-binding and thus inhibits agonist-induced cAMP production. Interacts with MRAP and MRAP2; these associated factors increase ligand-sensitivity and generation of cAMP (By similarity).</text>
</comment>
<comment type="subcellular location">
    <subcellularLocation>
        <location evidence="2">Cell membrane</location>
        <topology evidence="4">Multi-pass membrane protein</topology>
    </subcellularLocation>
</comment>
<comment type="similarity">
    <text evidence="5">Belongs to the G-protein coupled receptor 1 family.</text>
</comment>
<gene>
    <name type="primary">MC4R</name>
    <name type="ORF">QccE-10642</name>
</gene>
<reference key="1">
    <citation type="submission" date="2002-04" db="EMBL/GenBank/DDBJ databases">
        <title>Isolation and characterization of cDNA for macaque neurological disease genes.</title>
        <authorList>
            <person name="Kusuda J."/>
            <person name="Osada N."/>
            <person name="Hida M."/>
            <person name="Sugano S."/>
            <person name="Hashimoto K."/>
        </authorList>
    </citation>
    <scope>NUCLEOTIDE SEQUENCE [LARGE SCALE MRNA]</scope>
    <source>
        <tissue>Brain cortex</tissue>
    </source>
</reference>
<sequence length="332" mass="37002">MVNSTHRGMHASLHLWNRSSHRLHSNASESLGKGYSDGGCYEQLFVSPEVFVTLGVISLLENILVIVAIAKNKNLHSPMYFFICSLAVADMLVSVSNGSETIVITLLNSTDTDTQSFTVNIDNVIDSVICSSLLASICSLLSIAVDRYFTIFYALQYHNIMTVKRVRIIISCIWAACTVSGILFIIYSDSSAVIICLITMFFTMLALMASLYVHMFLMARLHIKRIAVLPGTGAIRQGANMKGAITLTILIGVFVVCWAPFFLHLIFYISCPQNPYCVCFMSHFNLYLILIMCNSVIDPLIYALRSQELRKTFKEIICCYPLGGLCDLSSRY</sequence>
<dbReference type="EMBL" id="AB083317">
    <property type="protein sequence ID" value="BAC20596.1"/>
    <property type="molecule type" value="mRNA"/>
</dbReference>
<dbReference type="RefSeq" id="NP_001306454.1">
    <property type="nucleotide sequence ID" value="NM_001319525.1"/>
</dbReference>
<dbReference type="SMR" id="Q8HXX3"/>
<dbReference type="STRING" id="9541.ENSMFAP00000012358"/>
<dbReference type="GlyCosmos" id="Q8HXX3">
    <property type="glycosylation" value="3 sites, No reported glycans"/>
</dbReference>
<dbReference type="eggNOG" id="KOG3656">
    <property type="taxonomic scope" value="Eukaryota"/>
</dbReference>
<dbReference type="Proteomes" id="UP000233100">
    <property type="component" value="Unplaced"/>
</dbReference>
<dbReference type="GO" id="GO:0005886">
    <property type="term" value="C:plasma membrane"/>
    <property type="evidence" value="ECO:0007669"/>
    <property type="project" value="UniProtKB-SubCell"/>
</dbReference>
<dbReference type="GO" id="GO:0004977">
    <property type="term" value="F:melanocortin receptor activity"/>
    <property type="evidence" value="ECO:0007669"/>
    <property type="project" value="InterPro"/>
</dbReference>
<dbReference type="GO" id="GO:0007189">
    <property type="term" value="P:adenylate cyclase-activating G protein-coupled receptor signaling pathway"/>
    <property type="evidence" value="ECO:0007669"/>
    <property type="project" value="UniProtKB-ARBA"/>
</dbReference>
<dbReference type="CDD" id="cd15353">
    <property type="entry name" value="7tmA_MC4R"/>
    <property type="match status" value="1"/>
</dbReference>
<dbReference type="FunFam" id="1.20.1070.10:FF:000077">
    <property type="entry name" value="Melanocortin receptor 4"/>
    <property type="match status" value="1"/>
</dbReference>
<dbReference type="Gene3D" id="1.20.1070.10">
    <property type="entry name" value="Rhodopsin 7-helix transmembrane proteins"/>
    <property type="match status" value="1"/>
</dbReference>
<dbReference type="InterPro" id="IPR000276">
    <property type="entry name" value="GPCR_Rhodpsn"/>
</dbReference>
<dbReference type="InterPro" id="IPR017452">
    <property type="entry name" value="GPCR_Rhodpsn_7TM"/>
</dbReference>
<dbReference type="InterPro" id="IPR001908">
    <property type="entry name" value="MC3-5R"/>
</dbReference>
<dbReference type="InterPro" id="IPR000155">
    <property type="entry name" value="Mcort_rcpt_4"/>
</dbReference>
<dbReference type="InterPro" id="IPR001671">
    <property type="entry name" value="Melcrt_ACTH_rcpt"/>
</dbReference>
<dbReference type="PANTHER" id="PTHR22750">
    <property type="entry name" value="G-PROTEIN COUPLED RECEPTOR"/>
    <property type="match status" value="1"/>
</dbReference>
<dbReference type="Pfam" id="PF00001">
    <property type="entry name" value="7tm_1"/>
    <property type="match status" value="1"/>
</dbReference>
<dbReference type="PRINTS" id="PR00237">
    <property type="entry name" value="GPCRRHODOPSN"/>
</dbReference>
<dbReference type="PRINTS" id="PR00534">
    <property type="entry name" value="MCRFAMILY"/>
</dbReference>
<dbReference type="PRINTS" id="PR00535">
    <property type="entry name" value="MELNOCORTINR"/>
</dbReference>
<dbReference type="PRINTS" id="PR01062">
    <property type="entry name" value="MELNOCORTN4R"/>
</dbReference>
<dbReference type="SMART" id="SM01381">
    <property type="entry name" value="7TM_GPCR_Srsx"/>
    <property type="match status" value="1"/>
</dbReference>
<dbReference type="SUPFAM" id="SSF81321">
    <property type="entry name" value="Family A G protein-coupled receptor-like"/>
    <property type="match status" value="1"/>
</dbReference>
<dbReference type="PROSITE" id="PS00237">
    <property type="entry name" value="G_PROTEIN_RECEP_F1_1"/>
    <property type="match status" value="1"/>
</dbReference>
<dbReference type="PROSITE" id="PS50262">
    <property type="entry name" value="G_PROTEIN_RECEP_F1_2"/>
    <property type="match status" value="1"/>
</dbReference>
<evidence type="ECO:0000250" key="1"/>
<evidence type="ECO:0000250" key="2">
    <source>
        <dbReference type="UniProtKB" id="P32245"/>
    </source>
</evidence>
<evidence type="ECO:0000250" key="3">
    <source>
        <dbReference type="UniProtKB" id="P56450"/>
    </source>
</evidence>
<evidence type="ECO:0000255" key="4"/>
<evidence type="ECO:0000255" key="5">
    <source>
        <dbReference type="PROSITE-ProRule" id="PRU00521"/>
    </source>
</evidence>
<protein>
    <recommendedName>
        <fullName>Melanocortin receptor 4</fullName>
        <shortName>MC4-R</shortName>
    </recommendedName>
</protein>
<organism>
    <name type="scientific">Macaca fascicularis</name>
    <name type="common">Crab-eating macaque</name>
    <name type="synonym">Cynomolgus monkey</name>
    <dbReference type="NCBI Taxonomy" id="9541"/>
    <lineage>
        <taxon>Eukaryota</taxon>
        <taxon>Metazoa</taxon>
        <taxon>Chordata</taxon>
        <taxon>Craniata</taxon>
        <taxon>Vertebrata</taxon>
        <taxon>Euteleostomi</taxon>
        <taxon>Mammalia</taxon>
        <taxon>Eutheria</taxon>
        <taxon>Euarchontoglires</taxon>
        <taxon>Primates</taxon>
        <taxon>Haplorrhini</taxon>
        <taxon>Catarrhini</taxon>
        <taxon>Cercopithecidae</taxon>
        <taxon>Cercopithecinae</taxon>
        <taxon>Macaca</taxon>
    </lineage>
</organism>
<name>MC4R_MACFA</name>